<organism>
    <name type="scientific">Postia placenta (strain ATCC 44394 / Madison 698-R)</name>
    <name type="common">Brown rot fungus</name>
    <name type="synonym">Poria monticola</name>
    <dbReference type="NCBI Taxonomy" id="561896"/>
    <lineage>
        <taxon>Eukaryota</taxon>
        <taxon>Fungi</taxon>
        <taxon>Dikarya</taxon>
        <taxon>Basidiomycota</taxon>
        <taxon>Agaricomycotina</taxon>
        <taxon>Agaricomycetes</taxon>
        <taxon>Polyporales</taxon>
        <taxon>Adustoporiaceae</taxon>
        <taxon>Rhodonia</taxon>
    </lineage>
</organism>
<reference key="1">
    <citation type="journal article" date="2009" name="Proc. Natl. Acad. Sci. U.S.A.">
        <title>Genome, transcriptome, and secretome analysis of wood decay fungus Postia placenta supports unique mechanisms of lignocellulose conversion.</title>
        <authorList>
            <person name="Martinez D."/>
            <person name="Challacombe J."/>
            <person name="Morgenstern I."/>
            <person name="Hibbett D."/>
            <person name="Schmoll M."/>
            <person name="Kubicek C.P."/>
            <person name="Ferreira P."/>
            <person name="Ruiz-Duenas F.J."/>
            <person name="Martinez A.T."/>
            <person name="Kersten P."/>
            <person name="Hammel K.E."/>
            <person name="Vanden Wymelenberg A."/>
            <person name="Gaskell J."/>
            <person name="Lindquist E."/>
            <person name="Sabat G."/>
            <person name="Splinter BonDurant S."/>
            <person name="Larrondo L.F."/>
            <person name="Canessa P."/>
            <person name="Vicuna R."/>
            <person name="Yadav J."/>
            <person name="Doddapaneni H."/>
            <person name="Subramanian V."/>
            <person name="Pisabarro A.G."/>
            <person name="Lavin J.L."/>
            <person name="Oguiza J.A."/>
            <person name="Master E."/>
            <person name="Henrissat B."/>
            <person name="Coutinho P.M."/>
            <person name="Harris P."/>
            <person name="Magnuson J.K."/>
            <person name="Baker S.E."/>
            <person name="Bruno K."/>
            <person name="Kenealy W."/>
            <person name="Hoegger P.J."/>
            <person name="Kuees U."/>
            <person name="Ramaiya P."/>
            <person name="Lucas S."/>
            <person name="Salamov A."/>
            <person name="Shapiro H."/>
            <person name="Tu H."/>
            <person name="Chee C.L."/>
            <person name="Misra M."/>
            <person name="Xie G."/>
            <person name="Teter S."/>
            <person name="Yaver D."/>
            <person name="James T."/>
            <person name="Mokrejs M."/>
            <person name="Pospisek M."/>
            <person name="Grigoriev I.V."/>
            <person name="Brettin T."/>
            <person name="Rokhsar D."/>
            <person name="Berka R."/>
            <person name="Cullen D."/>
        </authorList>
    </citation>
    <scope>NUCLEOTIDE SEQUENCE [LARGE SCALE GENOMIC DNA]</scope>
    <source>
        <strain>ATCC 44394 / Madison 698-R</strain>
    </source>
</reference>
<protein>
    <recommendedName>
        <fullName evidence="1">Small ribosomal subunit protein uS2</fullName>
    </recommendedName>
    <alternativeName>
        <fullName evidence="3">40S ribosomal protein S0</fullName>
    </alternativeName>
</protein>
<sequence length="297" mass="32100">MSSKLPSVLSATDEEIQLLLAAQAHIGSKNCDKQMLPYVWKRRADGIHILNIGKTWEKLVFAARIIAAIENPNDVCVISARPYGHRAVLKYAANTGAQAIAGRFTPGSFTNYITRSFKEPRLIVVTDPRVDHQAIREASYVNIPVIAFCDTDAPLKFVDVAIPTNNKSRHSIGLMWWLLAREVLRLRGTIPRTTDGWNVMVDMFFYRDPEEVEKQQQEEAQAKAAAAAGEAAEAPLNEWDVTAAPAAGGINPGLVAAEGGALDWSAEPAAAGPTDWAAEPTGASGWGAEPTGPSGWD</sequence>
<keyword id="KW-0963">Cytoplasm</keyword>
<keyword id="KW-0687">Ribonucleoprotein</keyword>
<keyword id="KW-0689">Ribosomal protein</keyword>
<evidence type="ECO:0000255" key="1">
    <source>
        <dbReference type="HAMAP-Rule" id="MF_03015"/>
    </source>
</evidence>
<evidence type="ECO:0000256" key="2">
    <source>
        <dbReference type="SAM" id="MobiDB-lite"/>
    </source>
</evidence>
<evidence type="ECO:0000305" key="3"/>
<feature type="chain" id="PRO_0000389287" description="Small ribosomal subunit protein uS2">
    <location>
        <begin position="1"/>
        <end position="297"/>
    </location>
</feature>
<feature type="region of interest" description="Disordered" evidence="2">
    <location>
        <begin position="265"/>
        <end position="297"/>
    </location>
</feature>
<name>RSSA_POSPM</name>
<proteinExistence type="inferred from homology"/>
<dbReference type="EMBL" id="EQ966295">
    <property type="protein sequence ID" value="EED82074.1"/>
    <property type="molecule type" value="Genomic_DNA"/>
</dbReference>
<dbReference type="RefSeq" id="XP_002472771.1">
    <property type="nucleotide sequence ID" value="XM_002472726.1"/>
</dbReference>
<dbReference type="SMR" id="B8PAR0"/>
<dbReference type="FunCoup" id="B8PAR0">
    <property type="interactions" value="171"/>
</dbReference>
<dbReference type="STRING" id="561896.B8PAR0"/>
<dbReference type="KEGG" id="ppl:POSPLDRAFT_114210"/>
<dbReference type="HOGENOM" id="CLU_058171_0_1_1"/>
<dbReference type="InParanoid" id="B8PAR0"/>
<dbReference type="OMA" id="QCHLGAK"/>
<dbReference type="OrthoDB" id="414863at2759"/>
<dbReference type="GO" id="GO:0022627">
    <property type="term" value="C:cytosolic small ribosomal subunit"/>
    <property type="evidence" value="ECO:0007669"/>
    <property type="project" value="UniProtKB-UniRule"/>
</dbReference>
<dbReference type="GO" id="GO:0003735">
    <property type="term" value="F:structural constituent of ribosome"/>
    <property type="evidence" value="ECO:0007669"/>
    <property type="project" value="UniProtKB-UniRule"/>
</dbReference>
<dbReference type="GO" id="GO:0000028">
    <property type="term" value="P:ribosomal small subunit assembly"/>
    <property type="evidence" value="ECO:0007669"/>
    <property type="project" value="UniProtKB-UniRule"/>
</dbReference>
<dbReference type="GO" id="GO:0006412">
    <property type="term" value="P:translation"/>
    <property type="evidence" value="ECO:0007669"/>
    <property type="project" value="UniProtKB-UniRule"/>
</dbReference>
<dbReference type="CDD" id="cd01425">
    <property type="entry name" value="RPS2"/>
    <property type="match status" value="1"/>
</dbReference>
<dbReference type="FunFam" id="3.40.50.10490:FF:000010">
    <property type="entry name" value="40S ribosomal protein S0"/>
    <property type="match status" value="1"/>
</dbReference>
<dbReference type="Gene3D" id="3.40.50.10490">
    <property type="entry name" value="Glucose-6-phosphate isomerase like protein, domain 1"/>
    <property type="match status" value="1"/>
</dbReference>
<dbReference type="HAMAP" id="MF_03015">
    <property type="entry name" value="Ribosomal_S2_euk"/>
    <property type="match status" value="1"/>
</dbReference>
<dbReference type="InterPro" id="IPR001865">
    <property type="entry name" value="Ribosomal_uS2"/>
</dbReference>
<dbReference type="InterPro" id="IPR032281">
    <property type="entry name" value="Ribosomal_uS2_C"/>
</dbReference>
<dbReference type="InterPro" id="IPR018130">
    <property type="entry name" value="Ribosomal_uS2_CS"/>
</dbReference>
<dbReference type="InterPro" id="IPR027498">
    <property type="entry name" value="Ribosomal_uS2_euk"/>
</dbReference>
<dbReference type="InterPro" id="IPR005707">
    <property type="entry name" value="Ribosomal_uS2_euk/arc"/>
</dbReference>
<dbReference type="InterPro" id="IPR023591">
    <property type="entry name" value="Ribosomal_uS2_flav_dom_sf"/>
</dbReference>
<dbReference type="NCBIfam" id="TIGR01012">
    <property type="entry name" value="uS2_euk_arch"/>
    <property type="match status" value="1"/>
</dbReference>
<dbReference type="PANTHER" id="PTHR11489">
    <property type="entry name" value="40S RIBOSOMAL PROTEIN SA"/>
    <property type="match status" value="1"/>
</dbReference>
<dbReference type="Pfam" id="PF16122">
    <property type="entry name" value="40S_SA_C"/>
    <property type="match status" value="1"/>
</dbReference>
<dbReference type="Pfam" id="PF00318">
    <property type="entry name" value="Ribosomal_S2"/>
    <property type="match status" value="2"/>
</dbReference>
<dbReference type="PRINTS" id="PR00395">
    <property type="entry name" value="RIBOSOMALS2"/>
</dbReference>
<dbReference type="SUPFAM" id="SSF52313">
    <property type="entry name" value="Ribosomal protein S2"/>
    <property type="match status" value="1"/>
</dbReference>
<dbReference type="PROSITE" id="PS00962">
    <property type="entry name" value="RIBOSOMAL_S2_1"/>
    <property type="match status" value="1"/>
</dbReference>
<dbReference type="PROSITE" id="PS00963">
    <property type="entry name" value="RIBOSOMAL_S2_2"/>
    <property type="match status" value="1"/>
</dbReference>
<accession>B8PAR0</accession>
<gene>
    <name evidence="1" type="primary">RPS0</name>
    <name type="ORF">POSPLDRAFT_114210</name>
</gene>
<comment type="function">
    <text evidence="1">Required for the assembly and/or stability of the 40S ribosomal subunit. Required for the processing of the 20S rRNA-precursor to mature 18S rRNA in a late step of the maturation of 40S ribosomal subunits.</text>
</comment>
<comment type="subunit">
    <text evidence="1">Component of the small ribosomal subunit. Mature ribosomes consist of a small (40S) and a large (60S) subunit. The 40S subunit contains about 33 different proteins and 1 molecule of RNA (18S). The 60S subunit contains about 49 different proteins and 3 molecules of RNA (25S, 5.8S and 5S). Interacts with RPS21.</text>
</comment>
<comment type="subcellular location">
    <subcellularLocation>
        <location evidence="1">Cytoplasm</location>
    </subcellularLocation>
</comment>
<comment type="similarity">
    <text evidence="1">Belongs to the universal ribosomal protein uS2 family.</text>
</comment>